<gene>
    <name evidence="1" type="primary">fosB</name>
    <name type="ordered locus">BALH_1802</name>
</gene>
<sequence>MLKGINHLCFSVSNLEDSITFYEKVLEGELLVRGRKLAYFNICGVWIALNEEIHIPRNEIHQSYTHIAFSVEQKDFERLLQRLEENDVHILQGRERDVRDCESIYFVDPDGHKFEFHSGTLQERLNYYREDKPHMTFY</sequence>
<feature type="chain" id="PRO_0000296657" description="Metallothiol transferase FosB">
    <location>
        <begin position="1"/>
        <end position="138"/>
    </location>
</feature>
<feature type="domain" description="VOC" evidence="2">
    <location>
        <begin position="4"/>
        <end position="119"/>
    </location>
</feature>
<feature type="active site" description="Proton donor/acceptor" evidence="2">
    <location>
        <position position="115"/>
    </location>
</feature>
<feature type="binding site" evidence="1">
    <location>
        <position position="7"/>
    </location>
    <ligand>
        <name>Mg(2+)</name>
        <dbReference type="ChEBI" id="CHEBI:18420"/>
    </ligand>
</feature>
<feature type="binding site" evidence="1">
    <location>
        <position position="66"/>
    </location>
    <ligand>
        <name>Mg(2+)</name>
        <dbReference type="ChEBI" id="CHEBI:18420"/>
    </ligand>
</feature>
<feature type="binding site" evidence="1">
    <location>
        <position position="115"/>
    </location>
    <ligand>
        <name>Mg(2+)</name>
        <dbReference type="ChEBI" id="CHEBI:18420"/>
    </ligand>
</feature>
<evidence type="ECO:0000255" key="1">
    <source>
        <dbReference type="HAMAP-Rule" id="MF_01512"/>
    </source>
</evidence>
<evidence type="ECO:0000255" key="2">
    <source>
        <dbReference type="PROSITE-ProRule" id="PRU01163"/>
    </source>
</evidence>
<proteinExistence type="inferred from homology"/>
<organism>
    <name type="scientific">Bacillus thuringiensis (strain Al Hakam)</name>
    <dbReference type="NCBI Taxonomy" id="412694"/>
    <lineage>
        <taxon>Bacteria</taxon>
        <taxon>Bacillati</taxon>
        <taxon>Bacillota</taxon>
        <taxon>Bacilli</taxon>
        <taxon>Bacillales</taxon>
        <taxon>Bacillaceae</taxon>
        <taxon>Bacillus</taxon>
        <taxon>Bacillus cereus group</taxon>
    </lineage>
</organism>
<name>FOSB_BACAH</name>
<reference key="1">
    <citation type="journal article" date="2007" name="J. Bacteriol.">
        <title>The complete genome sequence of Bacillus thuringiensis Al Hakam.</title>
        <authorList>
            <person name="Challacombe J.F."/>
            <person name="Altherr M.R."/>
            <person name="Xie G."/>
            <person name="Bhotika S.S."/>
            <person name="Brown N."/>
            <person name="Bruce D."/>
            <person name="Campbell C.S."/>
            <person name="Campbell M.L."/>
            <person name="Chen J."/>
            <person name="Chertkov O."/>
            <person name="Cleland C."/>
            <person name="Dimitrijevic M."/>
            <person name="Doggett N.A."/>
            <person name="Fawcett J.J."/>
            <person name="Glavina T."/>
            <person name="Goodwin L.A."/>
            <person name="Green L.D."/>
            <person name="Han C.S."/>
            <person name="Hill K.K."/>
            <person name="Hitchcock P."/>
            <person name="Jackson P.J."/>
            <person name="Keim P."/>
            <person name="Kewalramani A.R."/>
            <person name="Longmire J."/>
            <person name="Lucas S."/>
            <person name="Malfatti S."/>
            <person name="Martinez D."/>
            <person name="McMurry K."/>
            <person name="Meincke L.J."/>
            <person name="Misra M."/>
            <person name="Moseman B.L."/>
            <person name="Mundt M."/>
            <person name="Munk A.C."/>
            <person name="Okinaka R.T."/>
            <person name="Parson-Quintana B."/>
            <person name="Reilly L.P."/>
            <person name="Richardson P."/>
            <person name="Robinson D.L."/>
            <person name="Saunders E."/>
            <person name="Tapia R."/>
            <person name="Tesmer J.G."/>
            <person name="Thayer N."/>
            <person name="Thompson L.S."/>
            <person name="Tice H."/>
            <person name="Ticknor L.O."/>
            <person name="Wills P.L."/>
            <person name="Gilna P."/>
            <person name="Brettin T.S."/>
        </authorList>
    </citation>
    <scope>NUCLEOTIDE SEQUENCE [LARGE SCALE GENOMIC DNA]</scope>
    <source>
        <strain>Al Hakam</strain>
    </source>
</reference>
<keyword id="KW-0046">Antibiotic resistance</keyword>
<keyword id="KW-0963">Cytoplasm</keyword>
<keyword id="KW-0460">Magnesium</keyword>
<keyword id="KW-0479">Metal-binding</keyword>
<keyword id="KW-0808">Transferase</keyword>
<dbReference type="EC" id="2.5.1.-" evidence="1"/>
<dbReference type="EMBL" id="CP000485">
    <property type="protein sequence ID" value="ABK85124.1"/>
    <property type="molecule type" value="Genomic_DNA"/>
</dbReference>
<dbReference type="RefSeq" id="WP_000911694.1">
    <property type="nucleotide sequence ID" value="NC_008600.1"/>
</dbReference>
<dbReference type="SMR" id="A0RD31"/>
<dbReference type="KEGG" id="btl:BALH_1802"/>
<dbReference type="HOGENOM" id="CLU_121356_0_0_9"/>
<dbReference type="GO" id="GO:0005737">
    <property type="term" value="C:cytoplasm"/>
    <property type="evidence" value="ECO:0007669"/>
    <property type="project" value="UniProtKB-SubCell"/>
</dbReference>
<dbReference type="GO" id="GO:0000287">
    <property type="term" value="F:magnesium ion binding"/>
    <property type="evidence" value="ECO:0007669"/>
    <property type="project" value="UniProtKB-UniRule"/>
</dbReference>
<dbReference type="GO" id="GO:0016765">
    <property type="term" value="F:transferase activity, transferring alkyl or aryl (other than methyl) groups"/>
    <property type="evidence" value="ECO:0007669"/>
    <property type="project" value="UniProtKB-UniRule"/>
</dbReference>
<dbReference type="GO" id="GO:0046677">
    <property type="term" value="P:response to antibiotic"/>
    <property type="evidence" value="ECO:0007669"/>
    <property type="project" value="UniProtKB-UniRule"/>
</dbReference>
<dbReference type="FunFam" id="3.10.180.10:FF:000015">
    <property type="entry name" value="Metallothiol transferase FosB"/>
    <property type="match status" value="1"/>
</dbReference>
<dbReference type="Gene3D" id="3.10.180.10">
    <property type="entry name" value="2,3-Dihydroxybiphenyl 1,2-Dioxygenase, domain 1"/>
    <property type="match status" value="1"/>
</dbReference>
<dbReference type="HAMAP" id="MF_01512">
    <property type="entry name" value="FosB"/>
    <property type="match status" value="1"/>
</dbReference>
<dbReference type="InterPro" id="IPR051332">
    <property type="entry name" value="Fosfomycin_Res_Enzymes"/>
</dbReference>
<dbReference type="InterPro" id="IPR029068">
    <property type="entry name" value="Glyas_Bleomycin-R_OHBP_Dase"/>
</dbReference>
<dbReference type="InterPro" id="IPR004360">
    <property type="entry name" value="Glyas_Fos-R_dOase_dom"/>
</dbReference>
<dbReference type="InterPro" id="IPR022858">
    <property type="entry name" value="Metallothiol_Trafse_FosB"/>
</dbReference>
<dbReference type="InterPro" id="IPR037523">
    <property type="entry name" value="VOC"/>
</dbReference>
<dbReference type="NCBIfam" id="NF000493">
    <property type="entry name" value="Fos_BSH"/>
    <property type="match status" value="1"/>
</dbReference>
<dbReference type="NCBIfam" id="NF041541">
    <property type="entry name" value="fosBx1_fam"/>
    <property type="match status" value="1"/>
</dbReference>
<dbReference type="NCBIfam" id="NF003152">
    <property type="entry name" value="PRK04101.1"/>
    <property type="match status" value="1"/>
</dbReference>
<dbReference type="PANTHER" id="PTHR36113:SF6">
    <property type="entry name" value="FOSFOMYCIN RESISTANCE PROTEIN FOSX"/>
    <property type="match status" value="1"/>
</dbReference>
<dbReference type="PANTHER" id="PTHR36113">
    <property type="entry name" value="LYASE, PUTATIVE-RELATED-RELATED"/>
    <property type="match status" value="1"/>
</dbReference>
<dbReference type="Pfam" id="PF00903">
    <property type="entry name" value="Glyoxalase"/>
    <property type="match status" value="1"/>
</dbReference>
<dbReference type="SUPFAM" id="SSF54593">
    <property type="entry name" value="Glyoxalase/Bleomycin resistance protein/Dihydroxybiphenyl dioxygenase"/>
    <property type="match status" value="1"/>
</dbReference>
<dbReference type="PROSITE" id="PS51819">
    <property type="entry name" value="VOC"/>
    <property type="match status" value="1"/>
</dbReference>
<accession>A0RD31</accession>
<comment type="function">
    <text evidence="1">Metallothiol transferase which confers resistance to fosfomycin by catalyzing the addition of a thiol cofactor to fosfomycin. L-cysteine is probably the physiological thiol donor.</text>
</comment>
<comment type="cofactor">
    <cofactor evidence="1">
        <name>Mg(2+)</name>
        <dbReference type="ChEBI" id="CHEBI:18420"/>
    </cofactor>
</comment>
<comment type="subunit">
    <text evidence="1">Homodimer.</text>
</comment>
<comment type="subcellular location">
    <subcellularLocation>
        <location evidence="1">Cytoplasm</location>
    </subcellularLocation>
</comment>
<comment type="similarity">
    <text evidence="1">Belongs to the fosfomycin resistance protein family. FosB subfamily.</text>
</comment>
<protein>
    <recommendedName>
        <fullName evidence="1">Metallothiol transferase FosB</fullName>
        <ecNumber evidence="1">2.5.1.-</ecNumber>
    </recommendedName>
    <alternativeName>
        <fullName evidence="1">Fosfomycin resistance protein</fullName>
    </alternativeName>
</protein>